<reference key="1">
    <citation type="journal article" date="1999" name="Nature">
        <title>Sequence and analysis of chromosome 2 of the plant Arabidopsis thaliana.</title>
        <authorList>
            <person name="Lin X."/>
            <person name="Kaul S."/>
            <person name="Rounsley S.D."/>
            <person name="Shea T.P."/>
            <person name="Benito M.-I."/>
            <person name="Town C.D."/>
            <person name="Fujii C.Y."/>
            <person name="Mason T.M."/>
            <person name="Bowman C.L."/>
            <person name="Barnstead M.E."/>
            <person name="Feldblyum T.V."/>
            <person name="Buell C.R."/>
            <person name="Ketchum K.A."/>
            <person name="Lee J.J."/>
            <person name="Ronning C.M."/>
            <person name="Koo H.L."/>
            <person name="Moffat K.S."/>
            <person name="Cronin L.A."/>
            <person name="Shen M."/>
            <person name="Pai G."/>
            <person name="Van Aken S."/>
            <person name="Umayam L."/>
            <person name="Tallon L.J."/>
            <person name="Gill J.E."/>
            <person name="Adams M.D."/>
            <person name="Carrera A.J."/>
            <person name="Creasy T.H."/>
            <person name="Goodman H.M."/>
            <person name="Somerville C.R."/>
            <person name="Copenhaver G.P."/>
            <person name="Preuss D."/>
            <person name="Nierman W.C."/>
            <person name="White O."/>
            <person name="Eisen J.A."/>
            <person name="Salzberg S.L."/>
            <person name="Fraser C.M."/>
            <person name="Venter J.C."/>
        </authorList>
    </citation>
    <scope>NUCLEOTIDE SEQUENCE [LARGE SCALE GENOMIC DNA]</scope>
    <source>
        <strain>cv. Columbia</strain>
    </source>
</reference>
<reference key="2">
    <citation type="journal article" date="2017" name="Plant J.">
        <title>Araport11: a complete reannotation of the Arabidopsis thaliana reference genome.</title>
        <authorList>
            <person name="Cheng C.Y."/>
            <person name="Krishnakumar V."/>
            <person name="Chan A.P."/>
            <person name="Thibaud-Nissen F."/>
            <person name="Schobel S."/>
            <person name="Town C.D."/>
        </authorList>
    </citation>
    <scope>GENOME REANNOTATION</scope>
    <source>
        <strain>cv. Columbia</strain>
    </source>
</reference>
<reference key="3">
    <citation type="journal article" date="2003" name="Science">
        <title>Empirical analysis of transcriptional activity in the Arabidopsis genome.</title>
        <authorList>
            <person name="Yamada K."/>
            <person name="Lim J."/>
            <person name="Dale J.M."/>
            <person name="Chen H."/>
            <person name="Shinn P."/>
            <person name="Palm C.J."/>
            <person name="Southwick A.M."/>
            <person name="Wu H.C."/>
            <person name="Kim C.J."/>
            <person name="Nguyen M."/>
            <person name="Pham P.K."/>
            <person name="Cheuk R.F."/>
            <person name="Karlin-Newmann G."/>
            <person name="Liu S.X."/>
            <person name="Lam B."/>
            <person name="Sakano H."/>
            <person name="Wu T."/>
            <person name="Yu G."/>
            <person name="Miranda M."/>
            <person name="Quach H.L."/>
            <person name="Tripp M."/>
            <person name="Chang C.H."/>
            <person name="Lee J.M."/>
            <person name="Toriumi M.J."/>
            <person name="Chan M.M."/>
            <person name="Tang C.C."/>
            <person name="Onodera C.S."/>
            <person name="Deng J.M."/>
            <person name="Akiyama K."/>
            <person name="Ansari Y."/>
            <person name="Arakawa T."/>
            <person name="Banh J."/>
            <person name="Banno F."/>
            <person name="Bowser L."/>
            <person name="Brooks S.Y."/>
            <person name="Carninci P."/>
            <person name="Chao Q."/>
            <person name="Choy N."/>
            <person name="Enju A."/>
            <person name="Goldsmith A.D."/>
            <person name="Gurjal M."/>
            <person name="Hansen N.F."/>
            <person name="Hayashizaki Y."/>
            <person name="Johnson-Hopson C."/>
            <person name="Hsuan V.W."/>
            <person name="Iida K."/>
            <person name="Karnes M."/>
            <person name="Khan S."/>
            <person name="Koesema E."/>
            <person name="Ishida J."/>
            <person name="Jiang P.X."/>
            <person name="Jones T."/>
            <person name="Kawai J."/>
            <person name="Kamiya A."/>
            <person name="Meyers C."/>
            <person name="Nakajima M."/>
            <person name="Narusaka M."/>
            <person name="Seki M."/>
            <person name="Sakurai T."/>
            <person name="Satou M."/>
            <person name="Tamse R."/>
            <person name="Vaysberg M."/>
            <person name="Wallender E.K."/>
            <person name="Wong C."/>
            <person name="Yamamura Y."/>
            <person name="Yuan S."/>
            <person name="Shinozaki K."/>
            <person name="Davis R.W."/>
            <person name="Theologis A."/>
            <person name="Ecker J.R."/>
        </authorList>
    </citation>
    <scope>NUCLEOTIDE SEQUENCE [LARGE SCALE MRNA]</scope>
    <source>
        <strain>cv. Columbia</strain>
    </source>
</reference>
<reference key="4">
    <citation type="journal article" date="2004" name="Plant Mol. Biol.">
        <title>Mitochondrial cytochrome c oxidase and succinate dehydrogenase complexes contain plant specific subunits.</title>
        <authorList>
            <person name="Millar A.H."/>
            <person name="Eubel H."/>
            <person name="Jansch L."/>
            <person name="Kruft V."/>
            <person name="Heazlewood J.L."/>
            <person name="Braun H.P."/>
        </authorList>
    </citation>
    <scope>PROTEIN SEQUENCE OF 1-14</scope>
    <scope>IDENTIFICATION BY MASS SPECTROMETRY</scope>
    <scope>SUBUNIT</scope>
</reference>
<protein>
    <recommendedName>
        <fullName evidence="2">Succinate dehydrogenase subunit 8, mitochondrial</fullName>
    </recommendedName>
</protein>
<sequence>MIYRKWSLLSGPPVILGGAVIAAVAVGFVLQNVTKGEQKKNVSTNK</sequence>
<feature type="chain" id="PRO_0000431757" description="Succinate dehydrogenase subunit 8, mitochondrial">
    <location>
        <begin position="1"/>
        <end position="46"/>
    </location>
</feature>
<dbReference type="EMBL" id="AC006526">
    <property type="protein sequence ID" value="AAD23054.1"/>
    <property type="molecule type" value="Genomic_DNA"/>
</dbReference>
<dbReference type="EMBL" id="CP002685">
    <property type="protein sequence ID" value="AEC10689.1"/>
    <property type="molecule type" value="Genomic_DNA"/>
</dbReference>
<dbReference type="EMBL" id="AF386973">
    <property type="protein sequence ID" value="AAK62418.1"/>
    <property type="molecule type" value="mRNA"/>
</dbReference>
<dbReference type="EMBL" id="BT002541">
    <property type="protein sequence ID" value="AAO00901.1"/>
    <property type="molecule type" value="mRNA"/>
</dbReference>
<dbReference type="PIR" id="C84902">
    <property type="entry name" value="C84902"/>
</dbReference>
<dbReference type="RefSeq" id="NP_566073.1">
    <property type="nucleotide sequence ID" value="NM_130203.4"/>
</dbReference>
<dbReference type="STRING" id="3702.Q9SKE0"/>
<dbReference type="PaxDb" id="3702-AT2G46390.1"/>
<dbReference type="EnsemblPlants" id="AT2G46390.1">
    <property type="protein sequence ID" value="AT2G46390.1"/>
    <property type="gene ID" value="AT2G46390"/>
</dbReference>
<dbReference type="GeneID" id="819247"/>
<dbReference type="Gramene" id="AT2G46390.1">
    <property type="protein sequence ID" value="AT2G46390.1"/>
    <property type="gene ID" value="AT2G46390"/>
</dbReference>
<dbReference type="KEGG" id="ath:AT2G46390"/>
<dbReference type="Araport" id="AT2G46390"/>
<dbReference type="TAIR" id="AT2G46390">
    <property type="gene designation" value="SDH8"/>
</dbReference>
<dbReference type="HOGENOM" id="CLU_3192024_0_0_1"/>
<dbReference type="InParanoid" id="Q9SKE0"/>
<dbReference type="BioCyc" id="ARA:AT2G46390-MONOMER"/>
<dbReference type="BioCyc" id="ARA:AT2G46505-MONOMER"/>
<dbReference type="BioCyc" id="MetaCyc:AT2G46390-MONOMER"/>
<dbReference type="UniPathway" id="UPA00223"/>
<dbReference type="PRO" id="PR:Q9SKE0"/>
<dbReference type="Proteomes" id="UP000006548">
    <property type="component" value="Chromosome 2"/>
</dbReference>
<dbReference type="ExpressionAtlas" id="Q9SKE0">
    <property type="expression patterns" value="baseline and differential"/>
</dbReference>
<dbReference type="GO" id="GO:0005743">
    <property type="term" value="C:mitochondrial inner membrane"/>
    <property type="evidence" value="ECO:0007669"/>
    <property type="project" value="UniProtKB-SubCell"/>
</dbReference>
<dbReference type="GO" id="GO:0045273">
    <property type="term" value="C:respiratory chain complex II (succinate dehydrogenase)"/>
    <property type="evidence" value="ECO:0000314"/>
    <property type="project" value="UniProtKB"/>
</dbReference>
<dbReference type="GO" id="GO:0006099">
    <property type="term" value="P:tricarboxylic acid cycle"/>
    <property type="evidence" value="ECO:0007669"/>
    <property type="project" value="UniProtKB-UniPathway"/>
</dbReference>
<proteinExistence type="evidence at protein level"/>
<comment type="pathway">
    <text evidence="2">Carbohydrate metabolism; tricarboxylic acid cycle.</text>
</comment>
<comment type="subunit">
    <text evidence="1">Component of complex II composed of eight subunits in plants: four classical SDH subunits SDH1, SDH2, SDH3 and SDH4 (a flavoprotein (FP), an iron-sulfur protein (IP), and a cytochrome b composed of a large and a small subunit.), as well as four subunits unknown in mitochondria from bacteria and heterotrophic eukaryotes.</text>
</comment>
<comment type="subcellular location">
    <subcellularLocation>
        <location evidence="2">Mitochondrion inner membrane</location>
        <topology evidence="2">Peripheral membrane protein</topology>
    </subcellularLocation>
</comment>
<gene>
    <name evidence="2" type="primary">SDH8</name>
    <name evidence="3" type="ordered locus">At2g46390</name>
    <name evidence="4" type="ORF">F11C10.8</name>
</gene>
<evidence type="ECO:0000269" key="1">
    <source>
    </source>
</evidence>
<evidence type="ECO:0000305" key="2"/>
<evidence type="ECO:0000312" key="3">
    <source>
        <dbReference type="Araport" id="AT2G46390"/>
    </source>
</evidence>
<evidence type="ECO:0000312" key="4">
    <source>
        <dbReference type="EMBL" id="AAK62418.1"/>
    </source>
</evidence>
<accession>Q9SKE0</accession>
<name>SDH8_ARATH</name>
<keyword id="KW-0903">Direct protein sequencing</keyword>
<keyword id="KW-0472">Membrane</keyword>
<keyword id="KW-0496">Mitochondrion</keyword>
<keyword id="KW-0999">Mitochondrion inner membrane</keyword>
<keyword id="KW-1185">Reference proteome</keyword>
<keyword id="KW-0816">Tricarboxylic acid cycle</keyword>
<organism>
    <name type="scientific">Arabidopsis thaliana</name>
    <name type="common">Mouse-ear cress</name>
    <dbReference type="NCBI Taxonomy" id="3702"/>
    <lineage>
        <taxon>Eukaryota</taxon>
        <taxon>Viridiplantae</taxon>
        <taxon>Streptophyta</taxon>
        <taxon>Embryophyta</taxon>
        <taxon>Tracheophyta</taxon>
        <taxon>Spermatophyta</taxon>
        <taxon>Magnoliopsida</taxon>
        <taxon>eudicotyledons</taxon>
        <taxon>Gunneridae</taxon>
        <taxon>Pentapetalae</taxon>
        <taxon>rosids</taxon>
        <taxon>malvids</taxon>
        <taxon>Brassicales</taxon>
        <taxon>Brassicaceae</taxon>
        <taxon>Camelineae</taxon>
        <taxon>Arabidopsis</taxon>
    </lineage>
</organism>